<sequence>MPKLRSATSTEGRNMAGARALWRATGVKDNDFGKPIIAIANSFTQFVPGHVHLKDMGSLVASAIEEAGGIAKEFNTIAVDDGIAMGHGGMLYSLPSRELIADSVEYMVNAHCADALVCISNCDKITPGMLMAALRLNIPVVFVSGGPMEAGKTKLSDKLIKLDLVDAMVAGADSNVSDEDSAKIERSACPTCGSCSGMFTANSMNCLTEALGLSLPGNGSMLATHADRRELFLEAGRRVMALAKRYYHQDDESALPRNIANFKAFENAMTLDIAMGGSSNTVLHLLAAAQEADVDFTMADIDRMSRLVPHLCKVAPSTPKYHMEDVHRAGGVMGILGELDRAGLLHTDVFHVAADNDGTPGSGTLKSVLAQYDVMQTQDEKVKHFFMAGPAGIPTTKAFSQDCRWPSLDNDRQEGCIRSREFAFSQEGGLAVLSGNVAENGCIVKTAGVDESNLTFIGSARVYESQDDAVAGILGGEVVAGDVVVIRYEGPKGGPGMQEMLYPTSYLKSRGLGKACALITDGRFSGGTSGLSIGHVSPEAAAGGTIALIENGDRIEIDIPKRSIKLAVSDVELNARREKMHSLGPMAWKPIGRQRYVSLALKAYAMLATSADKGAVRDRSKLED</sequence>
<accession>A6WTI9</accession>
<evidence type="ECO:0000255" key="1">
    <source>
        <dbReference type="HAMAP-Rule" id="MF_00012"/>
    </source>
</evidence>
<reference key="1">
    <citation type="submission" date="2007-07" db="EMBL/GenBank/DDBJ databases">
        <title>Complete sequence of chromosome of Shewanella baltica OS185.</title>
        <authorList>
            <consortium name="US DOE Joint Genome Institute"/>
            <person name="Copeland A."/>
            <person name="Lucas S."/>
            <person name="Lapidus A."/>
            <person name="Barry K."/>
            <person name="Glavina del Rio T."/>
            <person name="Dalin E."/>
            <person name="Tice H."/>
            <person name="Pitluck S."/>
            <person name="Sims D."/>
            <person name="Brettin T."/>
            <person name="Bruce D."/>
            <person name="Detter J.C."/>
            <person name="Han C."/>
            <person name="Schmutz J."/>
            <person name="Larimer F."/>
            <person name="Land M."/>
            <person name="Hauser L."/>
            <person name="Kyrpides N."/>
            <person name="Mikhailova N."/>
            <person name="Brettar I."/>
            <person name="Rodrigues J."/>
            <person name="Konstantinidis K."/>
            <person name="Tiedje J."/>
            <person name="Richardson P."/>
        </authorList>
    </citation>
    <scope>NUCLEOTIDE SEQUENCE [LARGE SCALE GENOMIC DNA]</scope>
    <source>
        <strain>OS185</strain>
    </source>
</reference>
<name>ILVD_SHEB8</name>
<keyword id="KW-0001">2Fe-2S</keyword>
<keyword id="KW-0028">Amino-acid biosynthesis</keyword>
<keyword id="KW-0100">Branched-chain amino acid biosynthesis</keyword>
<keyword id="KW-0408">Iron</keyword>
<keyword id="KW-0411">Iron-sulfur</keyword>
<keyword id="KW-0456">Lyase</keyword>
<keyword id="KW-0460">Magnesium</keyword>
<keyword id="KW-0479">Metal-binding</keyword>
<gene>
    <name evidence="1" type="primary">ilvD</name>
    <name type="ordered locus">Shew185_4007</name>
</gene>
<proteinExistence type="inferred from homology"/>
<organism>
    <name type="scientific">Shewanella baltica (strain OS185)</name>
    <dbReference type="NCBI Taxonomy" id="402882"/>
    <lineage>
        <taxon>Bacteria</taxon>
        <taxon>Pseudomonadati</taxon>
        <taxon>Pseudomonadota</taxon>
        <taxon>Gammaproteobacteria</taxon>
        <taxon>Alteromonadales</taxon>
        <taxon>Shewanellaceae</taxon>
        <taxon>Shewanella</taxon>
    </lineage>
</organism>
<protein>
    <recommendedName>
        <fullName evidence="1">Dihydroxy-acid dehydratase</fullName>
        <shortName evidence="1">DAD</shortName>
        <ecNumber evidence="1">4.2.1.9</ecNumber>
    </recommendedName>
</protein>
<dbReference type="EC" id="4.2.1.9" evidence="1"/>
<dbReference type="EMBL" id="CP000753">
    <property type="protein sequence ID" value="ABS10128.1"/>
    <property type="molecule type" value="Genomic_DNA"/>
</dbReference>
<dbReference type="RefSeq" id="WP_012090432.1">
    <property type="nucleotide sequence ID" value="NC_009665.1"/>
</dbReference>
<dbReference type="SMR" id="A6WTI9"/>
<dbReference type="KEGG" id="sbm:Shew185_4007"/>
<dbReference type="HOGENOM" id="CLU_014271_4_2_6"/>
<dbReference type="UniPathway" id="UPA00047">
    <property type="reaction ID" value="UER00057"/>
</dbReference>
<dbReference type="UniPathway" id="UPA00049">
    <property type="reaction ID" value="UER00061"/>
</dbReference>
<dbReference type="GO" id="GO:0005829">
    <property type="term" value="C:cytosol"/>
    <property type="evidence" value="ECO:0007669"/>
    <property type="project" value="TreeGrafter"/>
</dbReference>
<dbReference type="GO" id="GO:0051537">
    <property type="term" value="F:2 iron, 2 sulfur cluster binding"/>
    <property type="evidence" value="ECO:0007669"/>
    <property type="project" value="UniProtKB-UniRule"/>
</dbReference>
<dbReference type="GO" id="GO:0004160">
    <property type="term" value="F:dihydroxy-acid dehydratase activity"/>
    <property type="evidence" value="ECO:0007669"/>
    <property type="project" value="UniProtKB-UniRule"/>
</dbReference>
<dbReference type="GO" id="GO:0000287">
    <property type="term" value="F:magnesium ion binding"/>
    <property type="evidence" value="ECO:0007669"/>
    <property type="project" value="UniProtKB-UniRule"/>
</dbReference>
<dbReference type="GO" id="GO:0009097">
    <property type="term" value="P:isoleucine biosynthetic process"/>
    <property type="evidence" value="ECO:0007669"/>
    <property type="project" value="UniProtKB-UniRule"/>
</dbReference>
<dbReference type="GO" id="GO:0009099">
    <property type="term" value="P:L-valine biosynthetic process"/>
    <property type="evidence" value="ECO:0007669"/>
    <property type="project" value="UniProtKB-UniRule"/>
</dbReference>
<dbReference type="FunFam" id="3.50.30.80:FF:000001">
    <property type="entry name" value="Dihydroxy-acid dehydratase"/>
    <property type="match status" value="1"/>
</dbReference>
<dbReference type="Gene3D" id="3.50.30.80">
    <property type="entry name" value="IlvD/EDD C-terminal domain-like"/>
    <property type="match status" value="1"/>
</dbReference>
<dbReference type="HAMAP" id="MF_00012">
    <property type="entry name" value="IlvD"/>
    <property type="match status" value="1"/>
</dbReference>
<dbReference type="InterPro" id="IPR042096">
    <property type="entry name" value="Dihydro-acid_dehy_C"/>
</dbReference>
<dbReference type="InterPro" id="IPR004404">
    <property type="entry name" value="DihydroxyA_deHydtase"/>
</dbReference>
<dbReference type="InterPro" id="IPR020558">
    <property type="entry name" value="DiOHA_6PGluconate_deHydtase_CS"/>
</dbReference>
<dbReference type="InterPro" id="IPR056740">
    <property type="entry name" value="ILV_EDD_C"/>
</dbReference>
<dbReference type="InterPro" id="IPR000581">
    <property type="entry name" value="ILV_EDD_N"/>
</dbReference>
<dbReference type="InterPro" id="IPR037237">
    <property type="entry name" value="IlvD/EDD_N"/>
</dbReference>
<dbReference type="NCBIfam" id="TIGR00110">
    <property type="entry name" value="ilvD"/>
    <property type="match status" value="1"/>
</dbReference>
<dbReference type="NCBIfam" id="NF009103">
    <property type="entry name" value="PRK12448.1"/>
    <property type="match status" value="1"/>
</dbReference>
<dbReference type="PANTHER" id="PTHR43661">
    <property type="entry name" value="D-XYLONATE DEHYDRATASE"/>
    <property type="match status" value="1"/>
</dbReference>
<dbReference type="PANTHER" id="PTHR43661:SF3">
    <property type="entry name" value="D-XYLONATE DEHYDRATASE YAGF-RELATED"/>
    <property type="match status" value="1"/>
</dbReference>
<dbReference type="Pfam" id="PF24877">
    <property type="entry name" value="ILV_EDD_C"/>
    <property type="match status" value="1"/>
</dbReference>
<dbReference type="Pfam" id="PF00920">
    <property type="entry name" value="ILVD_EDD_N"/>
    <property type="match status" value="1"/>
</dbReference>
<dbReference type="SUPFAM" id="SSF143975">
    <property type="entry name" value="IlvD/EDD N-terminal domain-like"/>
    <property type="match status" value="1"/>
</dbReference>
<dbReference type="SUPFAM" id="SSF52016">
    <property type="entry name" value="LeuD/IlvD-like"/>
    <property type="match status" value="1"/>
</dbReference>
<dbReference type="PROSITE" id="PS00886">
    <property type="entry name" value="ILVD_EDD_1"/>
    <property type="match status" value="1"/>
</dbReference>
<dbReference type="PROSITE" id="PS00887">
    <property type="entry name" value="ILVD_EDD_2"/>
    <property type="match status" value="1"/>
</dbReference>
<comment type="function">
    <text evidence="1">Functions in the biosynthesis of branched-chain amino acids. Catalyzes the dehydration of (2R,3R)-2,3-dihydroxy-3-methylpentanoate (2,3-dihydroxy-3-methylvalerate) into 2-oxo-3-methylpentanoate (2-oxo-3-methylvalerate) and of (2R)-2,3-dihydroxy-3-methylbutanoate (2,3-dihydroxyisovalerate) into 2-oxo-3-methylbutanoate (2-oxoisovalerate), the penultimate precursor to L-isoleucine and L-valine, respectively.</text>
</comment>
<comment type="catalytic activity">
    <reaction evidence="1">
        <text>(2R)-2,3-dihydroxy-3-methylbutanoate = 3-methyl-2-oxobutanoate + H2O</text>
        <dbReference type="Rhea" id="RHEA:24809"/>
        <dbReference type="ChEBI" id="CHEBI:11851"/>
        <dbReference type="ChEBI" id="CHEBI:15377"/>
        <dbReference type="ChEBI" id="CHEBI:49072"/>
        <dbReference type="EC" id="4.2.1.9"/>
    </reaction>
    <physiologicalReaction direction="left-to-right" evidence="1">
        <dbReference type="Rhea" id="RHEA:24810"/>
    </physiologicalReaction>
</comment>
<comment type="catalytic activity">
    <reaction evidence="1">
        <text>(2R,3R)-2,3-dihydroxy-3-methylpentanoate = (S)-3-methyl-2-oxopentanoate + H2O</text>
        <dbReference type="Rhea" id="RHEA:27694"/>
        <dbReference type="ChEBI" id="CHEBI:15377"/>
        <dbReference type="ChEBI" id="CHEBI:35146"/>
        <dbReference type="ChEBI" id="CHEBI:49258"/>
        <dbReference type="EC" id="4.2.1.9"/>
    </reaction>
    <physiologicalReaction direction="left-to-right" evidence="1">
        <dbReference type="Rhea" id="RHEA:27695"/>
    </physiologicalReaction>
</comment>
<comment type="cofactor">
    <cofactor evidence="1">
        <name>[2Fe-2S] cluster</name>
        <dbReference type="ChEBI" id="CHEBI:190135"/>
    </cofactor>
    <text evidence="1">Binds 1 [2Fe-2S] cluster per subunit. This cluster acts as a Lewis acid cofactor.</text>
</comment>
<comment type="cofactor">
    <cofactor evidence="1">
        <name>Mg(2+)</name>
        <dbReference type="ChEBI" id="CHEBI:18420"/>
    </cofactor>
</comment>
<comment type="pathway">
    <text evidence="1">Amino-acid biosynthesis; L-isoleucine biosynthesis; L-isoleucine from 2-oxobutanoate: step 3/4.</text>
</comment>
<comment type="pathway">
    <text evidence="1">Amino-acid biosynthesis; L-valine biosynthesis; L-valine from pyruvate: step 3/4.</text>
</comment>
<comment type="subunit">
    <text evidence="1">Homodimer.</text>
</comment>
<comment type="similarity">
    <text evidence="1">Belongs to the IlvD/Edd family.</text>
</comment>
<feature type="chain" id="PRO_1000001051" description="Dihydroxy-acid dehydratase">
    <location>
        <begin position="1"/>
        <end position="624"/>
    </location>
</feature>
<feature type="active site" description="Proton acceptor" evidence="1">
    <location>
        <position position="525"/>
    </location>
</feature>
<feature type="binding site" evidence="1">
    <location>
        <position position="81"/>
    </location>
    <ligand>
        <name>Mg(2+)</name>
        <dbReference type="ChEBI" id="CHEBI:18420"/>
    </ligand>
</feature>
<feature type="binding site" evidence="1">
    <location>
        <position position="122"/>
    </location>
    <ligand>
        <name>[2Fe-2S] cluster</name>
        <dbReference type="ChEBI" id="CHEBI:190135"/>
    </ligand>
</feature>
<feature type="binding site" evidence="1">
    <location>
        <position position="123"/>
    </location>
    <ligand>
        <name>Mg(2+)</name>
        <dbReference type="ChEBI" id="CHEBI:18420"/>
    </ligand>
</feature>
<feature type="binding site" description="via carbamate group" evidence="1">
    <location>
        <position position="124"/>
    </location>
    <ligand>
        <name>Mg(2+)</name>
        <dbReference type="ChEBI" id="CHEBI:18420"/>
    </ligand>
</feature>
<feature type="binding site" evidence="1">
    <location>
        <position position="195"/>
    </location>
    <ligand>
        <name>[2Fe-2S] cluster</name>
        <dbReference type="ChEBI" id="CHEBI:190135"/>
    </ligand>
</feature>
<feature type="binding site" evidence="1">
    <location>
        <position position="499"/>
    </location>
    <ligand>
        <name>Mg(2+)</name>
        <dbReference type="ChEBI" id="CHEBI:18420"/>
    </ligand>
</feature>
<feature type="modified residue" description="N6-carboxylysine" evidence="1">
    <location>
        <position position="124"/>
    </location>
</feature>